<sequence>MSYTINAVTRTEIGKGSSRRLRHAGKVPAVIYGPGKEPVSIKFEHKDIINIQLNDDFYTTDLTVSIEGKEVKVRVKAIQRHAFKQLVEHIDFMFA</sequence>
<evidence type="ECO:0000255" key="1">
    <source>
        <dbReference type="HAMAP-Rule" id="MF_01336"/>
    </source>
</evidence>
<evidence type="ECO:0000305" key="2"/>
<comment type="function">
    <text evidence="1">This is one of the proteins that binds to the 5S RNA in the ribosome where it forms part of the central protuberance.</text>
</comment>
<comment type="subunit">
    <text evidence="1">Part of the 50S ribosomal subunit; part of the 5S rRNA/L5/L18/L25 subcomplex. Contacts the 5S rRNA. Binds to the 5S rRNA independently of L5 and L18.</text>
</comment>
<comment type="similarity">
    <text evidence="1">Belongs to the bacterial ribosomal protein bL25 family.</text>
</comment>
<protein>
    <recommendedName>
        <fullName evidence="1">Large ribosomal subunit protein bL25</fullName>
    </recommendedName>
    <alternativeName>
        <fullName evidence="2">50S ribosomal protein L25</fullName>
    </alternativeName>
</protein>
<reference key="1">
    <citation type="submission" date="2006-08" db="EMBL/GenBank/DDBJ databases">
        <title>Complete sequence of Shewanella frigidimarina NCIMB 400.</title>
        <authorList>
            <consortium name="US DOE Joint Genome Institute"/>
            <person name="Copeland A."/>
            <person name="Lucas S."/>
            <person name="Lapidus A."/>
            <person name="Barry K."/>
            <person name="Detter J.C."/>
            <person name="Glavina del Rio T."/>
            <person name="Hammon N."/>
            <person name="Israni S."/>
            <person name="Dalin E."/>
            <person name="Tice H."/>
            <person name="Pitluck S."/>
            <person name="Fredrickson J.K."/>
            <person name="Kolker E."/>
            <person name="McCuel L.A."/>
            <person name="DiChristina T."/>
            <person name="Nealson K.H."/>
            <person name="Newman D."/>
            <person name="Tiedje J.M."/>
            <person name="Zhou J."/>
            <person name="Romine M.F."/>
            <person name="Culley D.E."/>
            <person name="Serres M."/>
            <person name="Chertkov O."/>
            <person name="Brettin T."/>
            <person name="Bruce D."/>
            <person name="Han C."/>
            <person name="Tapia R."/>
            <person name="Gilna P."/>
            <person name="Schmutz J."/>
            <person name="Larimer F."/>
            <person name="Land M."/>
            <person name="Hauser L."/>
            <person name="Kyrpides N."/>
            <person name="Mikhailova N."/>
            <person name="Richardson P."/>
        </authorList>
    </citation>
    <scope>NUCLEOTIDE SEQUENCE [LARGE SCALE GENOMIC DNA]</scope>
    <source>
        <strain>NCIMB 400</strain>
    </source>
</reference>
<feature type="chain" id="PRO_1000052965" description="Large ribosomal subunit protein bL25">
    <location>
        <begin position="1"/>
        <end position="95"/>
    </location>
</feature>
<organism>
    <name type="scientific">Shewanella frigidimarina (strain NCIMB 400)</name>
    <dbReference type="NCBI Taxonomy" id="318167"/>
    <lineage>
        <taxon>Bacteria</taxon>
        <taxon>Pseudomonadati</taxon>
        <taxon>Pseudomonadota</taxon>
        <taxon>Gammaproteobacteria</taxon>
        <taxon>Alteromonadales</taxon>
        <taxon>Shewanellaceae</taxon>
        <taxon>Shewanella</taxon>
    </lineage>
</organism>
<keyword id="KW-1185">Reference proteome</keyword>
<keyword id="KW-0687">Ribonucleoprotein</keyword>
<keyword id="KW-0689">Ribosomal protein</keyword>
<keyword id="KW-0694">RNA-binding</keyword>
<keyword id="KW-0699">rRNA-binding</keyword>
<gene>
    <name evidence="1" type="primary">rplY</name>
    <name type="ordered locus">Sfri_1442</name>
</gene>
<dbReference type="EMBL" id="CP000447">
    <property type="protein sequence ID" value="ABI71294.1"/>
    <property type="molecule type" value="Genomic_DNA"/>
</dbReference>
<dbReference type="RefSeq" id="WP_011636915.1">
    <property type="nucleotide sequence ID" value="NC_008345.1"/>
</dbReference>
<dbReference type="SMR" id="Q084M1"/>
<dbReference type="STRING" id="318167.Sfri_1442"/>
<dbReference type="KEGG" id="sfr:Sfri_1442"/>
<dbReference type="eggNOG" id="COG1825">
    <property type="taxonomic scope" value="Bacteria"/>
</dbReference>
<dbReference type="HOGENOM" id="CLU_137946_0_0_6"/>
<dbReference type="OrthoDB" id="9806411at2"/>
<dbReference type="Proteomes" id="UP000000684">
    <property type="component" value="Chromosome"/>
</dbReference>
<dbReference type="GO" id="GO:0022625">
    <property type="term" value="C:cytosolic large ribosomal subunit"/>
    <property type="evidence" value="ECO:0007669"/>
    <property type="project" value="TreeGrafter"/>
</dbReference>
<dbReference type="GO" id="GO:0008097">
    <property type="term" value="F:5S rRNA binding"/>
    <property type="evidence" value="ECO:0007669"/>
    <property type="project" value="InterPro"/>
</dbReference>
<dbReference type="GO" id="GO:0003735">
    <property type="term" value="F:structural constituent of ribosome"/>
    <property type="evidence" value="ECO:0007669"/>
    <property type="project" value="InterPro"/>
</dbReference>
<dbReference type="GO" id="GO:0006412">
    <property type="term" value="P:translation"/>
    <property type="evidence" value="ECO:0007669"/>
    <property type="project" value="UniProtKB-UniRule"/>
</dbReference>
<dbReference type="CDD" id="cd00495">
    <property type="entry name" value="Ribosomal_L25_TL5_CTC"/>
    <property type="match status" value="1"/>
</dbReference>
<dbReference type="FunFam" id="2.40.240.10:FF:000002">
    <property type="entry name" value="50S ribosomal protein L25"/>
    <property type="match status" value="1"/>
</dbReference>
<dbReference type="Gene3D" id="2.40.240.10">
    <property type="entry name" value="Ribosomal Protein L25, Chain P"/>
    <property type="match status" value="1"/>
</dbReference>
<dbReference type="HAMAP" id="MF_01336">
    <property type="entry name" value="Ribosomal_bL25"/>
    <property type="match status" value="1"/>
</dbReference>
<dbReference type="InterPro" id="IPR020056">
    <property type="entry name" value="Rbsml_bL25/Gln-tRNA_synth_N"/>
</dbReference>
<dbReference type="InterPro" id="IPR011035">
    <property type="entry name" value="Ribosomal_bL25/Gln-tRNA_synth"/>
</dbReference>
<dbReference type="InterPro" id="IPR001021">
    <property type="entry name" value="Ribosomal_bL25_long"/>
</dbReference>
<dbReference type="InterPro" id="IPR020055">
    <property type="entry name" value="Ribosomal_bL25_short"/>
</dbReference>
<dbReference type="InterPro" id="IPR029751">
    <property type="entry name" value="Ribosomal_L25_dom"/>
</dbReference>
<dbReference type="InterPro" id="IPR020930">
    <property type="entry name" value="Ribosomal_uL5_bac-type"/>
</dbReference>
<dbReference type="NCBIfam" id="TIGR00731">
    <property type="entry name" value="bL25_bact_ctc"/>
    <property type="match status" value="1"/>
</dbReference>
<dbReference type="NCBIfam" id="NF004612">
    <property type="entry name" value="PRK05943.1"/>
    <property type="match status" value="1"/>
</dbReference>
<dbReference type="PANTHER" id="PTHR33284">
    <property type="entry name" value="RIBOSOMAL PROTEIN L25/GLN-TRNA SYNTHETASE, ANTI-CODON-BINDING DOMAIN-CONTAINING PROTEIN"/>
    <property type="match status" value="1"/>
</dbReference>
<dbReference type="PANTHER" id="PTHR33284:SF1">
    <property type="entry name" value="RIBOSOMAL PROTEIN L25_GLN-TRNA SYNTHETASE, ANTI-CODON-BINDING DOMAIN-CONTAINING PROTEIN"/>
    <property type="match status" value="1"/>
</dbReference>
<dbReference type="Pfam" id="PF01386">
    <property type="entry name" value="Ribosomal_L25p"/>
    <property type="match status" value="1"/>
</dbReference>
<dbReference type="SUPFAM" id="SSF50715">
    <property type="entry name" value="Ribosomal protein L25-like"/>
    <property type="match status" value="1"/>
</dbReference>
<name>RL25_SHEFN</name>
<proteinExistence type="inferred from homology"/>
<accession>Q084M1</accession>